<keyword id="KW-0221">Differentiation</keyword>
<keyword id="KW-0539">Nucleus</keyword>
<keyword id="KW-1185">Reference proteome</keyword>
<keyword id="KW-0943">RNA-mediated gene silencing</keyword>
<keyword id="KW-0744">Spermatogenesis</keyword>
<feature type="chain" id="PRO_0000425556" description="piRNA-mediated silencing protein C19orf84 homolog">
    <location>
        <begin position="1"/>
        <end position="185"/>
    </location>
</feature>
<feature type="region of interest" description="Disordered" evidence="1">
    <location>
        <begin position="1"/>
        <end position="38"/>
    </location>
</feature>
<feature type="region of interest" description="Disordered" evidence="1">
    <location>
        <begin position="93"/>
        <end position="185"/>
    </location>
</feature>
<feature type="compositionally biased region" description="Polar residues" evidence="1">
    <location>
        <begin position="11"/>
        <end position="25"/>
    </location>
</feature>
<feature type="compositionally biased region" description="Low complexity" evidence="1">
    <location>
        <begin position="26"/>
        <end position="38"/>
    </location>
</feature>
<feature type="compositionally biased region" description="Basic residues" evidence="1">
    <location>
        <begin position="118"/>
        <end position="130"/>
    </location>
</feature>
<feature type="compositionally biased region" description="Basic and acidic residues" evidence="1">
    <location>
        <begin position="139"/>
        <end position="150"/>
    </location>
</feature>
<evidence type="ECO:0000256" key="1">
    <source>
        <dbReference type="SAM" id="MobiDB-lite"/>
    </source>
</evidence>
<evidence type="ECO:0000269" key="2">
    <source>
    </source>
</evidence>
<evidence type="ECO:0000305" key="3"/>
<evidence type="ECO:0000312" key="4">
    <source>
        <dbReference type="MGI" id="MGI:5621884"/>
    </source>
</evidence>
<organism>
    <name type="scientific">Mus musculus</name>
    <name type="common">Mouse</name>
    <dbReference type="NCBI Taxonomy" id="10090"/>
    <lineage>
        <taxon>Eukaryota</taxon>
        <taxon>Metazoa</taxon>
        <taxon>Chordata</taxon>
        <taxon>Craniata</taxon>
        <taxon>Vertebrata</taxon>
        <taxon>Euteleostomi</taxon>
        <taxon>Mammalia</taxon>
        <taxon>Eutheria</taxon>
        <taxon>Euarchontoglires</taxon>
        <taxon>Glires</taxon>
        <taxon>Rodentia</taxon>
        <taxon>Myomorpha</taxon>
        <taxon>Muroidea</taxon>
        <taxon>Muridae</taxon>
        <taxon>Murinae</taxon>
        <taxon>Mus</taxon>
        <taxon>Mus</taxon>
    </lineage>
</organism>
<accession>H3BKT1</accession>
<proteinExistence type="evidence at protein level"/>
<comment type="function">
    <text evidence="2">Protein adapter involved in piRNA-directed transposon methylation by connecting PIWIL4-piRNA and DNA methylation machineries (PubMed:38359823). The PIWIL4-piRNA pathway plays a central role during spermatogenesis by directing transposon DNA methylation and silencing, thereby preventing their mobilization, which is essential for the germline integrity (PubMed:38359823).</text>
</comment>
<comment type="subunit">
    <text evidence="2">Interacts with SPOCD1.</text>
</comment>
<comment type="subcellular location">
    <subcellularLocation>
        <location evidence="2">Nucleus</location>
        <location evidence="2">Nucleoplasm</location>
    </subcellularLocation>
</comment>
<comment type="disruption phenotype">
    <text evidence="2">Mice are viable and healthy but show male sterility due to defects in spermatogenesis (PubMed:38359823). Male mice display atrophic testes and the absence of spermatozoa in the epididymis (PubMed:38359823). Transposons are derepressed due to DNA demethylation (PubMed:38359823).</text>
</comment>
<gene>
    <name evidence="4" type="primary">Gm52993</name>
    <name evidence="4" type="synonym">Gm38999</name>
</gene>
<sequence length="185" mass="19979">MDELEDGALSNGDNLSLPSAGTESWPTSATPGLPPSLLSTLDPTHLGLPEQLASVTVPIRLDTLSYLLHSALLGTYNLQQSLPPCSCTAQPSHIWPDTVRRPPRRSGQARGGWEVRRRPSRGWGRGRGRGRVWAQSQRGPERAEERERNMAGEPGAGPSTPPVTPPSQDGQKEAGGLSEDWEADY</sequence>
<reference key="1">
    <citation type="journal article" date="2009" name="PLoS Biol.">
        <title>Lineage-specific biology revealed by a finished genome assembly of the mouse.</title>
        <authorList>
            <person name="Church D.M."/>
            <person name="Goodstadt L."/>
            <person name="Hillier L.W."/>
            <person name="Zody M.C."/>
            <person name="Goldstein S."/>
            <person name="She X."/>
            <person name="Bult C.J."/>
            <person name="Agarwala R."/>
            <person name="Cherry J.L."/>
            <person name="DiCuccio M."/>
            <person name="Hlavina W."/>
            <person name="Kapustin Y."/>
            <person name="Meric P."/>
            <person name="Maglott D."/>
            <person name="Birtle Z."/>
            <person name="Marques A.C."/>
            <person name="Graves T."/>
            <person name="Zhou S."/>
            <person name="Teague B."/>
            <person name="Potamousis K."/>
            <person name="Churas C."/>
            <person name="Place M."/>
            <person name="Herschleb J."/>
            <person name="Runnheim R."/>
            <person name="Forrest D."/>
            <person name="Amos-Landgraf J."/>
            <person name="Schwartz D.C."/>
            <person name="Cheng Z."/>
            <person name="Lindblad-Toh K."/>
            <person name="Eichler E.E."/>
            <person name="Ponting C.P."/>
        </authorList>
    </citation>
    <scope>NUCLEOTIDE SEQUENCE [LARGE SCALE GENOMIC DNA]</scope>
    <source>
        <strain>C57BL/6J</strain>
    </source>
</reference>
<reference key="2">
    <citation type="journal article" date="2024" name="Mol. Cell">
        <title>C19ORF84 connects piRNA and DNA methylation machineries to defend the mammalian germ line.</title>
        <authorList>
            <person name="Zoch A."/>
            <person name="Konieczny G."/>
            <person name="Auchynnikava T."/>
            <person name="Stallmeyer B."/>
            <person name="Rotte N."/>
            <person name="Heep M."/>
            <person name="Berrens R.V."/>
            <person name="Schito M."/>
            <person name="Kabayama Y."/>
            <person name="Schopp T."/>
            <person name="Kliesch S."/>
            <person name="Houston B."/>
            <person name="Nagirnaja L."/>
            <person name="O'Bryan M.K."/>
            <person name="Aston K.I."/>
            <person name="Conrad D.F."/>
            <person name="Rappsilber J."/>
            <person name="Allshire R.C."/>
            <person name="Cook A.G."/>
            <person name="Tuttelmann F."/>
            <person name="O'Carroll D."/>
        </authorList>
    </citation>
    <scope>FUNCTION</scope>
    <scope>SUBCELLULAR LOCATION</scope>
    <scope>INTERACTION WITH SPOCD1</scope>
    <scope>DISRUPTION PHENOTYPE</scope>
</reference>
<dbReference type="EMBL" id="AC149091">
    <property type="status" value="NOT_ANNOTATED_CDS"/>
    <property type="molecule type" value="Genomic_DNA"/>
</dbReference>
<dbReference type="CCDS" id="CCDS90216.1"/>
<dbReference type="RefSeq" id="XP_011249238.1">
    <property type="nucleotide sequence ID" value="XM_011250936.1"/>
</dbReference>
<dbReference type="GlyGen" id="H3BKT1">
    <property type="glycosylation" value="2 sites"/>
</dbReference>
<dbReference type="PaxDb" id="10090-ENSMUSP00000135513"/>
<dbReference type="Ensembl" id="ENSMUST00000177375.2">
    <property type="protein sequence ID" value="ENSMUSP00000158870.2"/>
    <property type="gene ID" value="ENSMUSG00000093639.5"/>
</dbReference>
<dbReference type="Ensembl" id="ENSMUST00000239023.2">
    <property type="protein sequence ID" value="ENSMUSP00000159166.2"/>
    <property type="gene ID" value="ENSMUSG00000118553.2"/>
</dbReference>
<dbReference type="AGR" id="MGI:5621884"/>
<dbReference type="AGR" id="MGI:6388878"/>
<dbReference type="MGI" id="MGI:5621884">
    <property type="gene designation" value="Gm38999"/>
</dbReference>
<dbReference type="MGI" id="MGI:6388878">
    <property type="gene designation" value="Gm52993"/>
</dbReference>
<dbReference type="VEuPathDB" id="HostDB:ENSMUSG00000093639"/>
<dbReference type="VEuPathDB" id="HostDB:ENSMUSG00000118553"/>
<dbReference type="eggNOG" id="ENOG502T3QQ">
    <property type="taxonomic scope" value="Eukaryota"/>
</dbReference>
<dbReference type="GeneTree" id="ENSGT00660000097488"/>
<dbReference type="HOGENOM" id="CLU_1453944_0_0_1"/>
<dbReference type="InParanoid" id="H3BKT1"/>
<dbReference type="OMA" id="PSCPCVP"/>
<dbReference type="OrthoDB" id="9450965at2759"/>
<dbReference type="BioGRID-ORCS" id="105242927">
    <property type="hits" value="0 hits in 32 CRISPR screens"/>
</dbReference>
<dbReference type="PRO" id="PR:H3BKT1"/>
<dbReference type="Proteomes" id="UP000000589">
    <property type="component" value="Chromosome 7"/>
</dbReference>
<dbReference type="RNAct" id="H3BKT1">
    <property type="molecule type" value="protein"/>
</dbReference>
<dbReference type="Bgee" id="ENSMUSG00000093639">
    <property type="expression patterns" value="Expressed in lens of camera-type eye and 2 other cell types or tissues"/>
</dbReference>
<dbReference type="GO" id="GO:0005654">
    <property type="term" value="C:nucleoplasm"/>
    <property type="evidence" value="ECO:0000314"/>
    <property type="project" value="UniProtKB"/>
</dbReference>
<dbReference type="GO" id="GO:0030154">
    <property type="term" value="P:cell differentiation"/>
    <property type="evidence" value="ECO:0007669"/>
    <property type="project" value="UniProtKB-KW"/>
</dbReference>
<dbReference type="GO" id="GO:0007283">
    <property type="term" value="P:spermatogenesis"/>
    <property type="evidence" value="ECO:0007669"/>
    <property type="project" value="UniProtKB-KW"/>
</dbReference>
<dbReference type="GO" id="GO:0010526">
    <property type="term" value="P:transposable element silencing"/>
    <property type="evidence" value="ECO:0000314"/>
    <property type="project" value="UniProtKB"/>
</dbReference>
<dbReference type="GO" id="GO:0141196">
    <property type="term" value="P:transposable element silencing by piRNA-mediated DNA methylation"/>
    <property type="evidence" value="ECO:0000315"/>
    <property type="project" value="FlyBase"/>
</dbReference>
<dbReference type="InterPro" id="IPR040606">
    <property type="entry name" value="C19orf84"/>
</dbReference>
<dbReference type="Pfam" id="PF17703">
    <property type="entry name" value="C19orf84"/>
    <property type="match status" value="1"/>
</dbReference>
<protein>
    <recommendedName>
        <fullName evidence="3">piRNA-mediated silencing protein C19orf84 homolog</fullName>
    </recommendedName>
</protein>
<name>CS084_MOUSE</name>